<accession>A4GCJ9</accession>
<proteinExistence type="inferred from homology"/>
<evidence type="ECO:0000255" key="1">
    <source>
        <dbReference type="HAMAP-Rule" id="MF_04068"/>
    </source>
</evidence>
<protein>
    <recommendedName>
        <fullName evidence="1">Matrix protein 1</fullName>
        <shortName evidence="1">M1</shortName>
    </recommendedName>
</protein>
<organismHost>
    <name type="scientific">Aves</name>
    <dbReference type="NCBI Taxonomy" id="8782"/>
</organismHost>
<organismHost>
    <name type="scientific">Homo sapiens</name>
    <name type="common">Human</name>
    <dbReference type="NCBI Taxonomy" id="9606"/>
</organismHost>
<organismHost>
    <name type="scientific">Sus scrofa</name>
    <name type="common">Pig</name>
    <dbReference type="NCBI Taxonomy" id="9823"/>
</organismHost>
<feature type="chain" id="PRO_0000372911" description="Matrix protein 1">
    <location>
        <begin position="1"/>
        <end position="252"/>
    </location>
</feature>
<feature type="region of interest" description="Membrane-binding" evidence="1">
    <location>
        <begin position="1"/>
        <end position="164"/>
    </location>
</feature>
<feature type="region of interest" description="RNP-binding" evidence="1">
    <location>
        <begin position="165"/>
        <end position="252"/>
    </location>
</feature>
<feature type="short sequence motif" description="Nuclear localization signal" evidence="1">
    <location>
        <begin position="101"/>
        <end position="105"/>
    </location>
</feature>
<organism>
    <name type="scientific">Influenza A virus (strain A/India/6263/1980 H1N1)</name>
    <dbReference type="NCBI Taxonomy" id="393562"/>
    <lineage>
        <taxon>Viruses</taxon>
        <taxon>Riboviria</taxon>
        <taxon>Orthornavirae</taxon>
        <taxon>Negarnaviricota</taxon>
        <taxon>Polyploviricotina</taxon>
        <taxon>Insthoviricetes</taxon>
        <taxon>Articulavirales</taxon>
        <taxon>Orthomyxoviridae</taxon>
        <taxon>Alphainfluenzavirus</taxon>
        <taxon>Alphainfluenzavirus influenzae</taxon>
        <taxon>Influenza A virus</taxon>
    </lineage>
</organism>
<reference key="1">
    <citation type="submission" date="2007-03" db="EMBL/GenBank/DDBJ databases">
        <title>The NIAID influenza genome sequencing project.</title>
        <authorList>
            <person name="Ghedin E."/>
            <person name="Spiro D."/>
            <person name="Miller N."/>
            <person name="Zaborsky J."/>
            <person name="Feldblyum T."/>
            <person name="Subbu V."/>
            <person name="Shumway M."/>
            <person name="Sparenborg J."/>
            <person name="Groveman L."/>
            <person name="Halpin R."/>
            <person name="Sitz J."/>
            <person name="Koo H."/>
            <person name="Salzberg S.L."/>
            <person name="Webster R.G."/>
            <person name="Hoffmann E."/>
            <person name="Krauss S."/>
            <person name="Naeve C."/>
            <person name="Bao Y."/>
            <person name="Bolotov P."/>
            <person name="Dernovoy D."/>
            <person name="Kiryutin B."/>
            <person name="Lipman D.J."/>
            <person name="Tatusova T."/>
        </authorList>
    </citation>
    <scope>NUCLEOTIDE SEQUENCE [GENOMIC RNA]</scope>
</reference>
<reference key="2">
    <citation type="submission" date="2007-03" db="EMBL/GenBank/DDBJ databases">
        <authorList>
            <consortium name="The NIAID Influenza Genome Sequencing Consortium"/>
        </authorList>
    </citation>
    <scope>NUCLEOTIDE SEQUENCE [GENOMIC RNA]</scope>
</reference>
<dbReference type="EMBL" id="CY020454">
    <property type="protein sequence ID" value="ABO38363.1"/>
    <property type="molecule type" value="Viral_cRNA"/>
</dbReference>
<dbReference type="SMR" id="A4GCJ9"/>
<dbReference type="Proteomes" id="UP000008580">
    <property type="component" value="Genome"/>
</dbReference>
<dbReference type="GO" id="GO:0042025">
    <property type="term" value="C:host cell nucleus"/>
    <property type="evidence" value="ECO:0007669"/>
    <property type="project" value="UniProtKB-SubCell"/>
</dbReference>
<dbReference type="GO" id="GO:0016020">
    <property type="term" value="C:membrane"/>
    <property type="evidence" value="ECO:0007669"/>
    <property type="project" value="UniProtKB-KW"/>
</dbReference>
<dbReference type="GO" id="GO:0055036">
    <property type="term" value="C:virion membrane"/>
    <property type="evidence" value="ECO:0007669"/>
    <property type="project" value="UniProtKB-SubCell"/>
</dbReference>
<dbReference type="GO" id="GO:0003723">
    <property type="term" value="F:RNA binding"/>
    <property type="evidence" value="ECO:0007669"/>
    <property type="project" value="UniProtKB-UniRule"/>
</dbReference>
<dbReference type="GO" id="GO:0039660">
    <property type="term" value="F:structural constituent of virion"/>
    <property type="evidence" value="ECO:0007669"/>
    <property type="project" value="UniProtKB-UniRule"/>
</dbReference>
<dbReference type="GO" id="GO:0046761">
    <property type="term" value="P:viral budding from plasma membrane"/>
    <property type="evidence" value="ECO:0007669"/>
    <property type="project" value="UniProtKB-UniRule"/>
</dbReference>
<dbReference type="FunFam" id="1.10.10.180:FF:000001">
    <property type="entry name" value="Matrix protein 1"/>
    <property type="match status" value="1"/>
</dbReference>
<dbReference type="FunFam" id="1.20.91.10:FF:000001">
    <property type="entry name" value="Matrix protein 1"/>
    <property type="match status" value="1"/>
</dbReference>
<dbReference type="Gene3D" id="1.10.10.180">
    <property type="match status" value="1"/>
</dbReference>
<dbReference type="Gene3D" id="1.20.91.10">
    <property type="match status" value="1"/>
</dbReference>
<dbReference type="HAMAP" id="MF_04068">
    <property type="entry name" value="INFV_M1"/>
    <property type="match status" value="1"/>
</dbReference>
<dbReference type="InterPro" id="IPR036039">
    <property type="entry name" value="Flu_matrix_M1"/>
</dbReference>
<dbReference type="InterPro" id="IPR013188">
    <property type="entry name" value="Flu_matrix_M1_C"/>
</dbReference>
<dbReference type="InterPro" id="IPR001561">
    <property type="entry name" value="Flu_matrix_M1_N"/>
</dbReference>
<dbReference type="InterPro" id="IPR015423">
    <property type="entry name" value="Flu_matrix_M1_N_sub1"/>
</dbReference>
<dbReference type="InterPro" id="IPR015799">
    <property type="entry name" value="Flu_matrix_M1_N_sub2"/>
</dbReference>
<dbReference type="InterPro" id="IPR037533">
    <property type="entry name" value="INFV_M1"/>
</dbReference>
<dbReference type="Pfam" id="PF00598">
    <property type="entry name" value="Flu_M1"/>
    <property type="match status" value="1"/>
</dbReference>
<dbReference type="Pfam" id="PF08289">
    <property type="entry name" value="Flu_M1_C"/>
    <property type="match status" value="1"/>
</dbReference>
<dbReference type="SMART" id="SM00759">
    <property type="entry name" value="Flu_M1_C"/>
    <property type="match status" value="1"/>
</dbReference>
<dbReference type="SUPFAM" id="SSF48145">
    <property type="entry name" value="Influenza virus matrix protein M1"/>
    <property type="match status" value="1"/>
</dbReference>
<comment type="function">
    <text evidence="1">Plays critical roles in virus replication, from virus entry and uncoating to assembly and budding of the virus particle. M1 binding to ribonucleocapsids (RNPs) in nucleus seems to inhibit viral transcription. Interaction of viral NEP with M1-RNP is thought to promote nuclear export of the complex, which is targeted to the virion assembly site at the apical plasma membrane in polarized epithelial cells. Interactions with NA and HA may bring M1, a non-raft-associated protein, into lipid rafts. Forms a continuous shell on the inner side of the lipid bilayer in virion, where it binds the RNP. During virus entry into cell, the M2 ion channel acidifies the internal virion core, inducing M1 dissociation from the RNP. M1-free RNPs are transported to the nucleus, where viral transcription and replication can take place.</text>
</comment>
<comment type="function">
    <text evidence="1">Determines the virion's shape: spherical or filamentous. Clinical isolates of influenza are characterized by the presence of significant proportion of filamentous virions, whereas after multiple passage on eggs or cell culture, virions have only spherical morphology. Filamentous virions are thought to be important to infect neighboring cells, and spherical virions more suited to spread through aerosol between hosts organisms.</text>
</comment>
<comment type="subunit">
    <text evidence="1">Homodimer and homomultimer. Interacts with NEP. Binds ribonucleocapsid by both interacting with genomic RNA and NP protein. May interact with HA and NA. Cannot bind NP without genomic RNA.</text>
</comment>
<comment type="subcellular location">
    <subcellularLocation>
        <location evidence="1">Virion membrane</location>
        <topology evidence="1">Peripheral membrane protein</topology>
        <orientation evidence="1">Cytoplasmic side</orientation>
    </subcellularLocation>
    <subcellularLocation>
        <location evidence="1">Host nucleus</location>
    </subcellularLocation>
</comment>
<comment type="alternative products">
    <event type="alternative splicing"/>
    <isoform>
        <id>A4GCJ9-1</id>
        <name>M1</name>
        <sequence type="displayed"/>
    </isoform>
    <isoform>
        <id>A4GCJ8-1</id>
        <name>M2</name>
        <sequence type="external"/>
    </isoform>
    <text>Only the first 9 residues are shared by the 2 isoforms.</text>
</comment>
<comment type="miscellaneous">
    <text evidence="1">Most abundant protein in virion. When expressed alone can form virus-like particles in transfected cells.</text>
</comment>
<comment type="similarity">
    <text evidence="1">Belongs to the influenza viruses Matrix protein M1 family.</text>
</comment>
<gene>
    <name evidence="1" type="primary">M</name>
</gene>
<name>M1_I80AA</name>
<keyword id="KW-0025">Alternative splicing</keyword>
<keyword id="KW-1048">Host nucleus</keyword>
<keyword id="KW-0472">Membrane</keyword>
<keyword id="KW-0694">RNA-binding</keyword>
<keyword id="KW-0468">Viral matrix protein</keyword>
<keyword id="KW-0946">Virion</keyword>
<sequence length="252" mass="27807">MSLLTEVETYVLSIVPSGPLKAEIAQRLEDVFAGKNTDLEALMEWLKTRPILSPLTKGILGFVFTLTVPSERGLQRRRFVQNALNGNGDPNNMDRAVKLYRKLKREITFHGAKEIALSYSAGALASCMGLIYNRMGAVTTESAFGLICATCEQIADSQHKSHRQMVTTTNPLIRHENRMVLASTTAKAMEQMAGSSEQAAEAMEVASQARQMVQAMRAIGTHPSSSAGLKNDLLENLQAYQKRMGVQMQRFK</sequence>